<reference key="1">
    <citation type="journal article" date="2005" name="Arch. Microbiol.">
        <title>The genome sequence of an anaerobic aromatic-degrading denitrifying bacterium, strain EbN1.</title>
        <authorList>
            <person name="Rabus R."/>
            <person name="Kube M."/>
            <person name="Heider J."/>
            <person name="Beck A."/>
            <person name="Heitmann K."/>
            <person name="Widdel F."/>
            <person name="Reinhardt R."/>
        </authorList>
    </citation>
    <scope>NUCLEOTIDE SEQUENCE [LARGE SCALE GENOMIC DNA]</scope>
    <source>
        <strain>DSM 19018 / LMG 30748 / EbN1</strain>
    </source>
</reference>
<sequence length="176" mass="21253">MLDREGYRPNVGIILVNTRNEVFWGKRIREHSWQFPQGGIKHGESPEQAMFRELFEEVGLRPEHVKILGRTRGWLRYDVPKHWIKREWRNTYRGQKQIWFLLRLVGRDSDVCLRASTHPEFDAWRWSDYWVPLEAVIEFKRQVYQQALFELSKTLFRTRPCDPPEAYKALAEVREP</sequence>
<keyword id="KW-0378">Hydrolase</keyword>
<keyword id="KW-1185">Reference proteome</keyword>
<protein>
    <recommendedName>
        <fullName evidence="1">RNA pyrophosphohydrolase</fullName>
        <ecNumber evidence="1">3.6.1.-</ecNumber>
    </recommendedName>
    <alternativeName>
        <fullName evidence="1">(Di)nucleoside polyphosphate hydrolase</fullName>
    </alternativeName>
</protein>
<feature type="chain" id="PRO_0000231895" description="RNA pyrophosphohydrolase">
    <location>
        <begin position="1"/>
        <end position="176"/>
    </location>
</feature>
<feature type="domain" description="Nudix hydrolase" evidence="1">
    <location>
        <begin position="6"/>
        <end position="149"/>
    </location>
</feature>
<feature type="short sequence motif" description="Nudix box">
    <location>
        <begin position="38"/>
        <end position="59"/>
    </location>
</feature>
<accession>Q5P7T2</accession>
<organism>
    <name type="scientific">Aromatoleum aromaticum (strain DSM 19018 / LMG 30748 / EbN1)</name>
    <name type="common">Azoarcus sp. (strain EbN1)</name>
    <dbReference type="NCBI Taxonomy" id="76114"/>
    <lineage>
        <taxon>Bacteria</taxon>
        <taxon>Pseudomonadati</taxon>
        <taxon>Pseudomonadota</taxon>
        <taxon>Betaproteobacteria</taxon>
        <taxon>Rhodocyclales</taxon>
        <taxon>Rhodocyclaceae</taxon>
        <taxon>Aromatoleum</taxon>
    </lineage>
</organism>
<gene>
    <name evidence="1" type="primary">rppH</name>
    <name evidence="1" type="synonym">nudH</name>
    <name type="ordered locus">AZOSEA05070</name>
    <name type="ORF">ebA951</name>
</gene>
<evidence type="ECO:0000255" key="1">
    <source>
        <dbReference type="HAMAP-Rule" id="MF_00298"/>
    </source>
</evidence>
<dbReference type="EC" id="3.6.1.-" evidence="1"/>
<dbReference type="EMBL" id="CR555306">
    <property type="protein sequence ID" value="CAI06629.1"/>
    <property type="molecule type" value="Genomic_DNA"/>
</dbReference>
<dbReference type="RefSeq" id="WP_011236359.1">
    <property type="nucleotide sequence ID" value="NC_006513.1"/>
</dbReference>
<dbReference type="SMR" id="Q5P7T2"/>
<dbReference type="STRING" id="76114.ebA951"/>
<dbReference type="KEGG" id="eba:ebA951"/>
<dbReference type="eggNOG" id="COG0494">
    <property type="taxonomic scope" value="Bacteria"/>
</dbReference>
<dbReference type="HOGENOM" id="CLU_087195_3_1_4"/>
<dbReference type="OrthoDB" id="9816040at2"/>
<dbReference type="Proteomes" id="UP000006552">
    <property type="component" value="Chromosome"/>
</dbReference>
<dbReference type="GO" id="GO:0005737">
    <property type="term" value="C:cytoplasm"/>
    <property type="evidence" value="ECO:0007669"/>
    <property type="project" value="TreeGrafter"/>
</dbReference>
<dbReference type="GO" id="GO:0034353">
    <property type="term" value="F:mRNA 5'-diphosphatase activity"/>
    <property type="evidence" value="ECO:0007669"/>
    <property type="project" value="TreeGrafter"/>
</dbReference>
<dbReference type="GO" id="GO:0006402">
    <property type="term" value="P:mRNA catabolic process"/>
    <property type="evidence" value="ECO:0007669"/>
    <property type="project" value="TreeGrafter"/>
</dbReference>
<dbReference type="CDD" id="cd03671">
    <property type="entry name" value="NUDIX_Ap4A_hydrolase_plant_like"/>
    <property type="match status" value="1"/>
</dbReference>
<dbReference type="Gene3D" id="3.90.79.10">
    <property type="entry name" value="Nucleoside Triphosphate Pyrophosphohydrolase"/>
    <property type="match status" value="1"/>
</dbReference>
<dbReference type="HAMAP" id="MF_00298">
    <property type="entry name" value="Nudix_RppH"/>
    <property type="match status" value="1"/>
</dbReference>
<dbReference type="InterPro" id="IPR020476">
    <property type="entry name" value="Nudix_hydrolase"/>
</dbReference>
<dbReference type="InterPro" id="IPR015797">
    <property type="entry name" value="NUDIX_hydrolase-like_dom_sf"/>
</dbReference>
<dbReference type="InterPro" id="IPR020084">
    <property type="entry name" value="NUDIX_hydrolase_CS"/>
</dbReference>
<dbReference type="InterPro" id="IPR000086">
    <property type="entry name" value="NUDIX_hydrolase_dom"/>
</dbReference>
<dbReference type="InterPro" id="IPR022927">
    <property type="entry name" value="RppH"/>
</dbReference>
<dbReference type="NCBIfam" id="NF001935">
    <property type="entry name" value="PRK00714.1-2"/>
    <property type="match status" value="1"/>
</dbReference>
<dbReference type="NCBIfam" id="NF001937">
    <property type="entry name" value="PRK00714.1-4"/>
    <property type="match status" value="1"/>
</dbReference>
<dbReference type="NCBIfam" id="NF001938">
    <property type="entry name" value="PRK00714.1-5"/>
    <property type="match status" value="1"/>
</dbReference>
<dbReference type="PANTHER" id="PTHR23114">
    <property type="entry name" value="M7GPPPN-MRNA HYDROLASE"/>
    <property type="match status" value="1"/>
</dbReference>
<dbReference type="PANTHER" id="PTHR23114:SF17">
    <property type="entry name" value="M7GPPPN-MRNA HYDROLASE"/>
    <property type="match status" value="1"/>
</dbReference>
<dbReference type="Pfam" id="PF00293">
    <property type="entry name" value="NUDIX"/>
    <property type="match status" value="1"/>
</dbReference>
<dbReference type="PRINTS" id="PR00502">
    <property type="entry name" value="NUDIXFAMILY"/>
</dbReference>
<dbReference type="SUPFAM" id="SSF55811">
    <property type="entry name" value="Nudix"/>
    <property type="match status" value="1"/>
</dbReference>
<dbReference type="PROSITE" id="PS51462">
    <property type="entry name" value="NUDIX"/>
    <property type="match status" value="1"/>
</dbReference>
<dbReference type="PROSITE" id="PS00893">
    <property type="entry name" value="NUDIX_BOX"/>
    <property type="match status" value="1"/>
</dbReference>
<comment type="function">
    <text evidence="1">Accelerates the degradation of transcripts by removing pyrophosphate from the 5'-end of triphosphorylated RNA, leading to a more labile monophosphorylated state that can stimulate subsequent ribonuclease cleavage.</text>
</comment>
<comment type="cofactor">
    <cofactor evidence="1">
        <name>a divalent metal cation</name>
        <dbReference type="ChEBI" id="CHEBI:60240"/>
    </cofactor>
</comment>
<comment type="similarity">
    <text evidence="1">Belongs to the Nudix hydrolase family. RppH subfamily.</text>
</comment>
<name>RPPH_AROAE</name>
<proteinExistence type="inferred from homology"/>